<sequence>MGIITNIAVQTKNPERFNVSIQKENGETLVFSVDQDVLLQFRLKKGMKIDEHSFQQIVYADEVKKTYHQALYFLSYRMRSEQEVVDYLKKKGASESIIDDVLHKLRENKYVDDREFAFAYVRTQKQTTAKGPYVIRKELEKLGVAEEWIEQSLAIYSFDEQVETAKSLYEKAKKQRAKQSLRQWKYQIGQLLYRKGFPQEVIDRVLLSERDEKEEQEWEALEYQGRKAHRRYEKYNSPMYEQKMKQALYRKGFPLEMIEQFLDKLKEGDKR</sequence>
<gene>
    <name evidence="1" type="primary">recX</name>
    <name type="ordered locus">GWCH70_0457</name>
</gene>
<evidence type="ECO:0000255" key="1">
    <source>
        <dbReference type="HAMAP-Rule" id="MF_01114"/>
    </source>
</evidence>
<comment type="function">
    <text evidence="1">Modulates RecA activity.</text>
</comment>
<comment type="subcellular location">
    <subcellularLocation>
        <location evidence="1">Cytoplasm</location>
    </subcellularLocation>
</comment>
<comment type="similarity">
    <text evidence="1">Belongs to the RecX family.</text>
</comment>
<feature type="chain" id="PRO_1000213593" description="Regulatory protein RecX">
    <location>
        <begin position="1"/>
        <end position="271"/>
    </location>
</feature>
<reference key="1">
    <citation type="submission" date="2009-06" db="EMBL/GenBank/DDBJ databases">
        <title>Complete sequence of chromosome of Geopacillus sp. WCH70.</title>
        <authorList>
            <consortium name="US DOE Joint Genome Institute"/>
            <person name="Lucas S."/>
            <person name="Copeland A."/>
            <person name="Lapidus A."/>
            <person name="Glavina del Rio T."/>
            <person name="Dalin E."/>
            <person name="Tice H."/>
            <person name="Bruce D."/>
            <person name="Goodwin L."/>
            <person name="Pitluck S."/>
            <person name="Chertkov O."/>
            <person name="Brettin T."/>
            <person name="Detter J.C."/>
            <person name="Han C."/>
            <person name="Larimer F."/>
            <person name="Land M."/>
            <person name="Hauser L."/>
            <person name="Kyrpides N."/>
            <person name="Mikhailova N."/>
            <person name="Brumm P."/>
            <person name="Mead D.A."/>
            <person name="Richardson P."/>
        </authorList>
    </citation>
    <scope>NUCLEOTIDE SEQUENCE [LARGE SCALE GENOMIC DNA]</scope>
    <source>
        <strain>WCH70</strain>
    </source>
</reference>
<name>RECX_GEOSW</name>
<organism>
    <name type="scientific">Geobacillus sp. (strain WCH70)</name>
    <dbReference type="NCBI Taxonomy" id="471223"/>
    <lineage>
        <taxon>Bacteria</taxon>
        <taxon>Bacillati</taxon>
        <taxon>Bacillota</taxon>
        <taxon>Bacilli</taxon>
        <taxon>Bacillales</taxon>
        <taxon>Anoxybacillaceae</taxon>
        <taxon>Geobacillus</taxon>
    </lineage>
</organism>
<dbReference type="EMBL" id="CP001638">
    <property type="protein sequence ID" value="ACS23368.1"/>
    <property type="molecule type" value="Genomic_DNA"/>
</dbReference>
<dbReference type="SMR" id="C5D5S0"/>
<dbReference type="STRING" id="471223.GWCH70_0457"/>
<dbReference type="KEGG" id="gwc:GWCH70_0457"/>
<dbReference type="eggNOG" id="COG2137">
    <property type="taxonomic scope" value="Bacteria"/>
</dbReference>
<dbReference type="HOGENOM" id="CLU_066607_4_0_9"/>
<dbReference type="OrthoDB" id="5421057at2"/>
<dbReference type="GO" id="GO:0005737">
    <property type="term" value="C:cytoplasm"/>
    <property type="evidence" value="ECO:0007669"/>
    <property type="project" value="UniProtKB-SubCell"/>
</dbReference>
<dbReference type="GO" id="GO:0006282">
    <property type="term" value="P:regulation of DNA repair"/>
    <property type="evidence" value="ECO:0007669"/>
    <property type="project" value="UniProtKB-UniRule"/>
</dbReference>
<dbReference type="Gene3D" id="1.10.10.10">
    <property type="entry name" value="Winged helix-like DNA-binding domain superfamily/Winged helix DNA-binding domain"/>
    <property type="match status" value="4"/>
</dbReference>
<dbReference type="HAMAP" id="MF_01114">
    <property type="entry name" value="RecX"/>
    <property type="match status" value="1"/>
</dbReference>
<dbReference type="InterPro" id="IPR053926">
    <property type="entry name" value="RecX_HTH_1st"/>
</dbReference>
<dbReference type="InterPro" id="IPR053924">
    <property type="entry name" value="RecX_HTH_2nd"/>
</dbReference>
<dbReference type="InterPro" id="IPR053925">
    <property type="entry name" value="RecX_HTH_3rd"/>
</dbReference>
<dbReference type="InterPro" id="IPR003783">
    <property type="entry name" value="Regulatory_RecX"/>
</dbReference>
<dbReference type="InterPro" id="IPR036388">
    <property type="entry name" value="WH-like_DNA-bd_sf"/>
</dbReference>
<dbReference type="NCBIfam" id="NF010733">
    <property type="entry name" value="PRK14135.1"/>
    <property type="match status" value="1"/>
</dbReference>
<dbReference type="PANTHER" id="PTHR33602">
    <property type="entry name" value="REGULATORY PROTEIN RECX FAMILY PROTEIN"/>
    <property type="match status" value="1"/>
</dbReference>
<dbReference type="PANTHER" id="PTHR33602:SF1">
    <property type="entry name" value="REGULATORY PROTEIN RECX FAMILY PROTEIN"/>
    <property type="match status" value="1"/>
</dbReference>
<dbReference type="Pfam" id="PF21982">
    <property type="entry name" value="RecX_HTH1"/>
    <property type="match status" value="1"/>
</dbReference>
<dbReference type="Pfam" id="PF02631">
    <property type="entry name" value="RecX_HTH2"/>
    <property type="match status" value="1"/>
</dbReference>
<dbReference type="Pfam" id="PF21981">
    <property type="entry name" value="RecX_HTH3"/>
    <property type="match status" value="2"/>
</dbReference>
<accession>C5D5S0</accession>
<keyword id="KW-0963">Cytoplasm</keyword>
<protein>
    <recommendedName>
        <fullName evidence="1">Regulatory protein RecX</fullName>
    </recommendedName>
</protein>
<proteinExistence type="inferred from homology"/>